<keyword id="KW-0963">Cytoplasm</keyword>
<keyword id="KW-0489">Methyltransferase</keyword>
<keyword id="KW-0694">RNA-binding</keyword>
<keyword id="KW-0698">rRNA processing</keyword>
<keyword id="KW-0949">S-adenosyl-L-methionine</keyword>
<keyword id="KW-0808">Transferase</keyword>
<proteinExistence type="inferred from homology"/>
<reference key="1">
    <citation type="submission" date="2008-06" db="EMBL/GenBank/DDBJ databases">
        <title>Complete sequence of Chlorobium phaeobacteroides BS1.</title>
        <authorList>
            <consortium name="US DOE Joint Genome Institute"/>
            <person name="Lucas S."/>
            <person name="Copeland A."/>
            <person name="Lapidus A."/>
            <person name="Glavina del Rio T."/>
            <person name="Dalin E."/>
            <person name="Tice H."/>
            <person name="Bruce D."/>
            <person name="Goodwin L."/>
            <person name="Pitluck S."/>
            <person name="Schmutz J."/>
            <person name="Larimer F."/>
            <person name="Land M."/>
            <person name="Hauser L."/>
            <person name="Kyrpides N."/>
            <person name="Ovchinnikova G."/>
            <person name="Li T."/>
            <person name="Liu Z."/>
            <person name="Zhao F."/>
            <person name="Overmann J."/>
            <person name="Bryant D.A."/>
            <person name="Richardson P."/>
        </authorList>
    </citation>
    <scope>NUCLEOTIDE SEQUENCE [LARGE SCALE GENOMIC DNA]</scope>
    <source>
        <strain>BS1</strain>
    </source>
</reference>
<name>RSMA_CHLPB</name>
<comment type="function">
    <text evidence="1">Specifically dimethylates two adjacent adenosines (A1518 and A1519) in the loop of a conserved hairpin near the 3'-end of 16S rRNA in the 30S particle. May play a critical role in biogenesis of 30S subunits.</text>
</comment>
<comment type="catalytic activity">
    <reaction evidence="1">
        <text>adenosine(1518)/adenosine(1519) in 16S rRNA + 4 S-adenosyl-L-methionine = N(6)-dimethyladenosine(1518)/N(6)-dimethyladenosine(1519) in 16S rRNA + 4 S-adenosyl-L-homocysteine + 4 H(+)</text>
        <dbReference type="Rhea" id="RHEA:19609"/>
        <dbReference type="Rhea" id="RHEA-COMP:10232"/>
        <dbReference type="Rhea" id="RHEA-COMP:10233"/>
        <dbReference type="ChEBI" id="CHEBI:15378"/>
        <dbReference type="ChEBI" id="CHEBI:57856"/>
        <dbReference type="ChEBI" id="CHEBI:59789"/>
        <dbReference type="ChEBI" id="CHEBI:74411"/>
        <dbReference type="ChEBI" id="CHEBI:74493"/>
        <dbReference type="EC" id="2.1.1.182"/>
    </reaction>
</comment>
<comment type="subcellular location">
    <subcellularLocation>
        <location evidence="1">Cytoplasm</location>
    </subcellularLocation>
</comment>
<comment type="similarity">
    <text evidence="1">Belongs to the class I-like SAM-binding methyltransferase superfamily. rRNA adenine N(6)-methyltransferase family. RsmA subfamily.</text>
</comment>
<protein>
    <recommendedName>
        <fullName evidence="1">Ribosomal RNA small subunit methyltransferase A</fullName>
        <ecNumber evidence="1">2.1.1.182</ecNumber>
    </recommendedName>
    <alternativeName>
        <fullName evidence="1">16S rRNA (adenine(1518)-N(6)/adenine(1519)-N(6))-dimethyltransferase</fullName>
    </alternativeName>
    <alternativeName>
        <fullName evidence="1">16S rRNA dimethyladenosine transferase</fullName>
    </alternativeName>
    <alternativeName>
        <fullName evidence="1">16S rRNA dimethylase</fullName>
    </alternativeName>
    <alternativeName>
        <fullName evidence="1">S-adenosylmethionine-6-N', N'-adenosyl(rRNA) dimethyltransferase</fullName>
    </alternativeName>
</protein>
<organism>
    <name type="scientific">Chlorobium phaeobacteroides (strain BS1)</name>
    <dbReference type="NCBI Taxonomy" id="331678"/>
    <lineage>
        <taxon>Bacteria</taxon>
        <taxon>Pseudomonadati</taxon>
        <taxon>Chlorobiota</taxon>
        <taxon>Chlorobiia</taxon>
        <taxon>Chlorobiales</taxon>
        <taxon>Chlorobiaceae</taxon>
        <taxon>Chlorobium/Pelodictyon group</taxon>
        <taxon>Chlorobium</taxon>
    </lineage>
</organism>
<evidence type="ECO:0000255" key="1">
    <source>
        <dbReference type="HAMAP-Rule" id="MF_00607"/>
    </source>
</evidence>
<feature type="chain" id="PRO_1000130258" description="Ribosomal RNA small subunit methyltransferase A">
    <location>
        <begin position="1"/>
        <end position="262"/>
    </location>
</feature>
<feature type="binding site" evidence="1">
    <location>
        <position position="20"/>
    </location>
    <ligand>
        <name>S-adenosyl-L-methionine</name>
        <dbReference type="ChEBI" id="CHEBI:59789"/>
    </ligand>
</feature>
<feature type="binding site" evidence="1">
    <location>
        <position position="22"/>
    </location>
    <ligand>
        <name>S-adenosyl-L-methionine</name>
        <dbReference type="ChEBI" id="CHEBI:59789"/>
    </ligand>
</feature>
<feature type="binding site" evidence="1">
    <location>
        <position position="47"/>
    </location>
    <ligand>
        <name>S-adenosyl-L-methionine</name>
        <dbReference type="ChEBI" id="CHEBI:59789"/>
    </ligand>
</feature>
<feature type="binding site" evidence="1">
    <location>
        <position position="68"/>
    </location>
    <ligand>
        <name>S-adenosyl-L-methionine</name>
        <dbReference type="ChEBI" id="CHEBI:59789"/>
    </ligand>
</feature>
<feature type="binding site" evidence="1">
    <location>
        <position position="90"/>
    </location>
    <ligand>
        <name>S-adenosyl-L-methionine</name>
        <dbReference type="ChEBI" id="CHEBI:59789"/>
    </ligand>
</feature>
<feature type="binding site" evidence="1">
    <location>
        <position position="110"/>
    </location>
    <ligand>
        <name>S-adenosyl-L-methionine</name>
        <dbReference type="ChEBI" id="CHEBI:59789"/>
    </ligand>
</feature>
<sequence>MKKIEYKHTEIAVKKKLGQNFLTDQNICRKIVESAQLQENDHVLEIGPGFGALTTAILEVVPRFTAVEKDRILAEFIRNEYPSVRVIEMDFLKIDLEELASEGRLRIMGNIPYSITTPILFKLLDNRRNIFSETLMMQHEVARRLVASPGSKEYGILAVQLQTFCDVTYLFKVNRTVFKPRPEVDSAVVSIIPKTAIFDADETGFRNFVRTSFGQRRKTLHNNLKKYYDLSMVTSIDLKLRAESLSVEQFLTLFKELRPLPD</sequence>
<accession>B3EQT0</accession>
<dbReference type="EC" id="2.1.1.182" evidence="1"/>
<dbReference type="EMBL" id="CP001101">
    <property type="protein sequence ID" value="ACE04111.1"/>
    <property type="molecule type" value="Genomic_DNA"/>
</dbReference>
<dbReference type="SMR" id="B3EQT0"/>
<dbReference type="STRING" id="331678.Cphamn1_1177"/>
<dbReference type="KEGG" id="cpb:Cphamn1_1177"/>
<dbReference type="eggNOG" id="COG0030">
    <property type="taxonomic scope" value="Bacteria"/>
</dbReference>
<dbReference type="HOGENOM" id="CLU_041220_0_1_10"/>
<dbReference type="OrthoDB" id="9814755at2"/>
<dbReference type="GO" id="GO:0005829">
    <property type="term" value="C:cytosol"/>
    <property type="evidence" value="ECO:0007669"/>
    <property type="project" value="TreeGrafter"/>
</dbReference>
<dbReference type="GO" id="GO:0052908">
    <property type="term" value="F:16S rRNA (adenine(1518)-N(6)/adenine(1519)-N(6))-dimethyltransferase activity"/>
    <property type="evidence" value="ECO:0007669"/>
    <property type="project" value="UniProtKB-EC"/>
</dbReference>
<dbReference type="GO" id="GO:0003723">
    <property type="term" value="F:RNA binding"/>
    <property type="evidence" value="ECO:0007669"/>
    <property type="project" value="UniProtKB-KW"/>
</dbReference>
<dbReference type="CDD" id="cd02440">
    <property type="entry name" value="AdoMet_MTases"/>
    <property type="match status" value="1"/>
</dbReference>
<dbReference type="Gene3D" id="1.10.8.100">
    <property type="entry name" value="Ribosomal RNA adenine dimethylase-like, domain 2"/>
    <property type="match status" value="1"/>
</dbReference>
<dbReference type="Gene3D" id="3.40.50.150">
    <property type="entry name" value="Vaccinia Virus protein VP39"/>
    <property type="match status" value="1"/>
</dbReference>
<dbReference type="HAMAP" id="MF_00607">
    <property type="entry name" value="16SrRNA_methyltr_A"/>
    <property type="match status" value="1"/>
</dbReference>
<dbReference type="InterPro" id="IPR001737">
    <property type="entry name" value="KsgA/Erm"/>
</dbReference>
<dbReference type="InterPro" id="IPR023165">
    <property type="entry name" value="rRNA_Ade_diMease-like_C"/>
</dbReference>
<dbReference type="InterPro" id="IPR020596">
    <property type="entry name" value="rRNA_Ade_Mease_Trfase_CS"/>
</dbReference>
<dbReference type="InterPro" id="IPR020598">
    <property type="entry name" value="rRNA_Ade_methylase_Trfase_N"/>
</dbReference>
<dbReference type="InterPro" id="IPR011530">
    <property type="entry name" value="rRNA_adenine_dimethylase"/>
</dbReference>
<dbReference type="InterPro" id="IPR029063">
    <property type="entry name" value="SAM-dependent_MTases_sf"/>
</dbReference>
<dbReference type="NCBIfam" id="TIGR00755">
    <property type="entry name" value="ksgA"/>
    <property type="match status" value="1"/>
</dbReference>
<dbReference type="PANTHER" id="PTHR11727">
    <property type="entry name" value="DIMETHYLADENOSINE TRANSFERASE"/>
    <property type="match status" value="1"/>
</dbReference>
<dbReference type="PANTHER" id="PTHR11727:SF7">
    <property type="entry name" value="DIMETHYLADENOSINE TRANSFERASE-RELATED"/>
    <property type="match status" value="1"/>
</dbReference>
<dbReference type="Pfam" id="PF00398">
    <property type="entry name" value="RrnaAD"/>
    <property type="match status" value="1"/>
</dbReference>
<dbReference type="SMART" id="SM00650">
    <property type="entry name" value="rADc"/>
    <property type="match status" value="1"/>
</dbReference>
<dbReference type="SUPFAM" id="SSF53335">
    <property type="entry name" value="S-adenosyl-L-methionine-dependent methyltransferases"/>
    <property type="match status" value="1"/>
</dbReference>
<dbReference type="PROSITE" id="PS01131">
    <property type="entry name" value="RRNA_A_DIMETH"/>
    <property type="match status" value="1"/>
</dbReference>
<dbReference type="PROSITE" id="PS51689">
    <property type="entry name" value="SAM_RNA_A_N6_MT"/>
    <property type="match status" value="1"/>
</dbReference>
<gene>
    <name evidence="1" type="primary">rsmA</name>
    <name evidence="1" type="synonym">ksgA</name>
    <name type="ordered locus">Cphamn1_1177</name>
</gene>